<organism>
    <name type="scientific">Mus musculus</name>
    <name type="common">Mouse</name>
    <dbReference type="NCBI Taxonomy" id="10090"/>
    <lineage>
        <taxon>Eukaryota</taxon>
        <taxon>Metazoa</taxon>
        <taxon>Chordata</taxon>
        <taxon>Craniata</taxon>
        <taxon>Vertebrata</taxon>
        <taxon>Euteleostomi</taxon>
        <taxon>Mammalia</taxon>
        <taxon>Eutheria</taxon>
        <taxon>Euarchontoglires</taxon>
        <taxon>Glires</taxon>
        <taxon>Rodentia</taxon>
        <taxon>Myomorpha</taxon>
        <taxon>Muroidea</taxon>
        <taxon>Muridae</taxon>
        <taxon>Murinae</taxon>
        <taxon>Mus</taxon>
        <taxon>Mus</taxon>
    </lineage>
</organism>
<dbReference type="EMBL" id="BC031781">
    <property type="protein sequence ID" value="AAH31781.1"/>
    <property type="molecule type" value="mRNA"/>
</dbReference>
<dbReference type="EMBL" id="AK078485">
    <property type="protein sequence ID" value="BAC37302.2"/>
    <property type="molecule type" value="mRNA"/>
</dbReference>
<dbReference type="CCDS" id="CCDS15574.1"/>
<dbReference type="RefSeq" id="NP_666055.1">
    <property type="nucleotide sequence ID" value="NM_145943.1"/>
</dbReference>
<dbReference type="SMR" id="Q8K1J5"/>
<dbReference type="BioGRID" id="229012">
    <property type="interactions" value="2"/>
</dbReference>
<dbReference type="FunCoup" id="Q8K1J5">
    <property type="interactions" value="4712"/>
</dbReference>
<dbReference type="IntAct" id="Q8K1J5">
    <property type="interactions" value="1"/>
</dbReference>
<dbReference type="STRING" id="10090.ENSMUSP00000037890"/>
<dbReference type="GlyGen" id="Q8K1J5">
    <property type="glycosylation" value="1 site, 1 O-linked glycan (1 site)"/>
</dbReference>
<dbReference type="iPTMnet" id="Q8K1J5"/>
<dbReference type="PhosphoSitePlus" id="Q8K1J5"/>
<dbReference type="jPOST" id="Q8K1J5"/>
<dbReference type="PaxDb" id="10090-ENSMUSP00000037890"/>
<dbReference type="PeptideAtlas" id="Q8K1J5"/>
<dbReference type="ProteomicsDB" id="256941"/>
<dbReference type="Pumba" id="Q8K1J5"/>
<dbReference type="Antibodypedia" id="34648">
    <property type="antibodies" value="104 antibodies from 17 providers"/>
</dbReference>
<dbReference type="DNASU" id="208768"/>
<dbReference type="Ensembl" id="ENSMUST00000038091.8">
    <property type="protein sequence ID" value="ENSMUSP00000037890.7"/>
    <property type="gene ID" value="ENSMUSG00000038806.8"/>
</dbReference>
<dbReference type="GeneID" id="208768"/>
<dbReference type="KEGG" id="mmu:208768"/>
<dbReference type="UCSC" id="uc007dwt.1">
    <property type="organism name" value="mouse"/>
</dbReference>
<dbReference type="AGR" id="MGI:2384788"/>
<dbReference type="CTD" id="163859"/>
<dbReference type="MGI" id="MGI:2384788">
    <property type="gene designation" value="Sde2"/>
</dbReference>
<dbReference type="VEuPathDB" id="HostDB:ENSMUSG00000038806"/>
<dbReference type="eggNOG" id="KOG2827">
    <property type="taxonomic scope" value="Eukaryota"/>
</dbReference>
<dbReference type="GeneTree" id="ENSGT00530000063402"/>
<dbReference type="HOGENOM" id="CLU_042333_0_0_1"/>
<dbReference type="InParanoid" id="Q8K1J5"/>
<dbReference type="OMA" id="CFWTGLE"/>
<dbReference type="OrthoDB" id="547031at2759"/>
<dbReference type="PhylomeDB" id="Q8K1J5"/>
<dbReference type="TreeFam" id="TF314323"/>
<dbReference type="Reactome" id="R-MMU-72163">
    <property type="pathway name" value="mRNA Splicing - Major Pathway"/>
</dbReference>
<dbReference type="BioGRID-ORCS" id="208768">
    <property type="hits" value="24 hits in 78 CRISPR screens"/>
</dbReference>
<dbReference type="ChiTaRS" id="Sde2">
    <property type="organism name" value="mouse"/>
</dbReference>
<dbReference type="PRO" id="PR:Q8K1J5"/>
<dbReference type="Proteomes" id="UP000000589">
    <property type="component" value="Chromosome 1"/>
</dbReference>
<dbReference type="RNAct" id="Q8K1J5">
    <property type="molecule type" value="protein"/>
</dbReference>
<dbReference type="Bgee" id="ENSMUSG00000038806">
    <property type="expression patterns" value="Expressed in metanephric renal vesicle and 225 other cell types or tissues"/>
</dbReference>
<dbReference type="GO" id="GO:0005737">
    <property type="term" value="C:cytoplasm"/>
    <property type="evidence" value="ECO:0000250"/>
    <property type="project" value="UniProtKB"/>
</dbReference>
<dbReference type="GO" id="GO:0005829">
    <property type="term" value="C:cytosol"/>
    <property type="evidence" value="ECO:0007669"/>
    <property type="project" value="Ensembl"/>
</dbReference>
<dbReference type="GO" id="GO:0005794">
    <property type="term" value="C:Golgi apparatus"/>
    <property type="evidence" value="ECO:0007669"/>
    <property type="project" value="Ensembl"/>
</dbReference>
<dbReference type="GO" id="GO:0016607">
    <property type="term" value="C:nuclear speck"/>
    <property type="evidence" value="ECO:0007669"/>
    <property type="project" value="Ensembl"/>
</dbReference>
<dbReference type="GO" id="GO:0005634">
    <property type="term" value="C:nucleus"/>
    <property type="evidence" value="ECO:0000250"/>
    <property type="project" value="UniProtKB"/>
</dbReference>
<dbReference type="GO" id="GO:0005886">
    <property type="term" value="C:plasma membrane"/>
    <property type="evidence" value="ECO:0007669"/>
    <property type="project" value="Ensembl"/>
</dbReference>
<dbReference type="GO" id="GO:0003684">
    <property type="term" value="F:damaged DNA binding"/>
    <property type="evidence" value="ECO:0007669"/>
    <property type="project" value="Ensembl"/>
</dbReference>
<dbReference type="GO" id="GO:0030515">
    <property type="term" value="F:snoRNA binding"/>
    <property type="evidence" value="ECO:0000250"/>
    <property type="project" value="UniProtKB"/>
</dbReference>
<dbReference type="GO" id="GO:0051301">
    <property type="term" value="P:cell division"/>
    <property type="evidence" value="ECO:0007669"/>
    <property type="project" value="UniProtKB-KW"/>
</dbReference>
<dbReference type="GO" id="GO:0034644">
    <property type="term" value="P:cellular response to UV"/>
    <property type="evidence" value="ECO:0007669"/>
    <property type="project" value="Ensembl"/>
</dbReference>
<dbReference type="GO" id="GO:0006260">
    <property type="term" value="P:DNA replication"/>
    <property type="evidence" value="ECO:0007669"/>
    <property type="project" value="UniProtKB-KW"/>
</dbReference>
<dbReference type="GO" id="GO:0000479">
    <property type="term" value="P:endonucleolytic cleavage of tricistronic rRNA transcript (SSU-rRNA, 5.8S rRNA, LSU-rRNA)"/>
    <property type="evidence" value="ECO:0000250"/>
    <property type="project" value="UniProtKB"/>
</dbReference>
<dbReference type="GO" id="GO:0031571">
    <property type="term" value="P:mitotic G1 DNA damage checkpoint signaling"/>
    <property type="evidence" value="ECO:0007669"/>
    <property type="project" value="Ensembl"/>
</dbReference>
<dbReference type="GO" id="GO:0045292">
    <property type="term" value="P:mRNA cis splicing, via spliceosome"/>
    <property type="evidence" value="ECO:0000250"/>
    <property type="project" value="UniProtKB"/>
</dbReference>
<dbReference type="GO" id="GO:0016485">
    <property type="term" value="P:protein processing"/>
    <property type="evidence" value="ECO:0007669"/>
    <property type="project" value="Ensembl"/>
</dbReference>
<dbReference type="GO" id="GO:0016567">
    <property type="term" value="P:protein ubiquitination"/>
    <property type="evidence" value="ECO:0007669"/>
    <property type="project" value="Ensembl"/>
</dbReference>
<dbReference type="InterPro" id="IPR051421">
    <property type="entry name" value="RNA_Proc_DNA_Dmg_Regulator"/>
</dbReference>
<dbReference type="InterPro" id="IPR053822">
    <property type="entry name" value="SDE2-like_dom"/>
</dbReference>
<dbReference type="InterPro" id="IPR025086">
    <property type="entry name" value="SDE2/SF3A3_SAP"/>
</dbReference>
<dbReference type="InterPro" id="IPR053821">
    <property type="entry name" value="Sde2_Ubi"/>
</dbReference>
<dbReference type="PANTHER" id="PTHR12786">
    <property type="entry name" value="SPLICING FACTOR SF3A-RELATED"/>
    <property type="match status" value="1"/>
</dbReference>
<dbReference type="PANTHER" id="PTHR12786:SF1">
    <property type="entry name" value="SPLICING REGULATOR SDE2"/>
    <property type="match status" value="1"/>
</dbReference>
<dbReference type="Pfam" id="PF22782">
    <property type="entry name" value="SDE2"/>
    <property type="match status" value="1"/>
</dbReference>
<dbReference type="Pfam" id="PF13297">
    <property type="entry name" value="SDE2_2C"/>
    <property type="match status" value="1"/>
</dbReference>
<dbReference type="Pfam" id="PF22781">
    <property type="entry name" value="Sde2_N_Ubi_vert"/>
    <property type="match status" value="1"/>
</dbReference>
<reference key="1">
    <citation type="journal article" date="2004" name="Genome Res.">
        <title>The status, quality, and expansion of the NIH full-length cDNA project: the Mammalian Gene Collection (MGC).</title>
        <authorList>
            <consortium name="The MGC Project Team"/>
        </authorList>
    </citation>
    <scope>NUCLEOTIDE SEQUENCE [LARGE SCALE MRNA]</scope>
    <source>
        <strain>FVB/N</strain>
        <tissue>Mammary tumor</tissue>
    </source>
</reference>
<reference key="2">
    <citation type="journal article" date="2005" name="Science">
        <title>The transcriptional landscape of the mammalian genome.</title>
        <authorList>
            <person name="Carninci P."/>
            <person name="Kasukawa T."/>
            <person name="Katayama S."/>
            <person name="Gough J."/>
            <person name="Frith M.C."/>
            <person name="Maeda N."/>
            <person name="Oyama R."/>
            <person name="Ravasi T."/>
            <person name="Lenhard B."/>
            <person name="Wells C."/>
            <person name="Kodzius R."/>
            <person name="Shimokawa K."/>
            <person name="Bajic V.B."/>
            <person name="Brenner S.E."/>
            <person name="Batalov S."/>
            <person name="Forrest A.R."/>
            <person name="Zavolan M."/>
            <person name="Davis M.J."/>
            <person name="Wilming L.G."/>
            <person name="Aidinis V."/>
            <person name="Allen J.E."/>
            <person name="Ambesi-Impiombato A."/>
            <person name="Apweiler R."/>
            <person name="Aturaliya R.N."/>
            <person name="Bailey T.L."/>
            <person name="Bansal M."/>
            <person name="Baxter L."/>
            <person name="Beisel K.W."/>
            <person name="Bersano T."/>
            <person name="Bono H."/>
            <person name="Chalk A.M."/>
            <person name="Chiu K.P."/>
            <person name="Choudhary V."/>
            <person name="Christoffels A."/>
            <person name="Clutterbuck D.R."/>
            <person name="Crowe M.L."/>
            <person name="Dalla E."/>
            <person name="Dalrymple B.P."/>
            <person name="de Bono B."/>
            <person name="Della Gatta G."/>
            <person name="di Bernardo D."/>
            <person name="Down T."/>
            <person name="Engstrom P."/>
            <person name="Fagiolini M."/>
            <person name="Faulkner G."/>
            <person name="Fletcher C.F."/>
            <person name="Fukushima T."/>
            <person name="Furuno M."/>
            <person name="Futaki S."/>
            <person name="Gariboldi M."/>
            <person name="Georgii-Hemming P."/>
            <person name="Gingeras T.R."/>
            <person name="Gojobori T."/>
            <person name="Green R.E."/>
            <person name="Gustincich S."/>
            <person name="Harbers M."/>
            <person name="Hayashi Y."/>
            <person name="Hensch T.K."/>
            <person name="Hirokawa N."/>
            <person name="Hill D."/>
            <person name="Huminiecki L."/>
            <person name="Iacono M."/>
            <person name="Ikeo K."/>
            <person name="Iwama A."/>
            <person name="Ishikawa T."/>
            <person name="Jakt M."/>
            <person name="Kanapin A."/>
            <person name="Katoh M."/>
            <person name="Kawasawa Y."/>
            <person name="Kelso J."/>
            <person name="Kitamura H."/>
            <person name="Kitano H."/>
            <person name="Kollias G."/>
            <person name="Krishnan S.P."/>
            <person name="Kruger A."/>
            <person name="Kummerfeld S.K."/>
            <person name="Kurochkin I.V."/>
            <person name="Lareau L.F."/>
            <person name="Lazarevic D."/>
            <person name="Lipovich L."/>
            <person name="Liu J."/>
            <person name="Liuni S."/>
            <person name="McWilliam S."/>
            <person name="Madan Babu M."/>
            <person name="Madera M."/>
            <person name="Marchionni L."/>
            <person name="Matsuda H."/>
            <person name="Matsuzawa S."/>
            <person name="Miki H."/>
            <person name="Mignone F."/>
            <person name="Miyake S."/>
            <person name="Morris K."/>
            <person name="Mottagui-Tabar S."/>
            <person name="Mulder N."/>
            <person name="Nakano N."/>
            <person name="Nakauchi H."/>
            <person name="Ng P."/>
            <person name="Nilsson R."/>
            <person name="Nishiguchi S."/>
            <person name="Nishikawa S."/>
            <person name="Nori F."/>
            <person name="Ohara O."/>
            <person name="Okazaki Y."/>
            <person name="Orlando V."/>
            <person name="Pang K.C."/>
            <person name="Pavan W.J."/>
            <person name="Pavesi G."/>
            <person name="Pesole G."/>
            <person name="Petrovsky N."/>
            <person name="Piazza S."/>
            <person name="Reed J."/>
            <person name="Reid J.F."/>
            <person name="Ring B.Z."/>
            <person name="Ringwald M."/>
            <person name="Rost B."/>
            <person name="Ruan Y."/>
            <person name="Salzberg S.L."/>
            <person name="Sandelin A."/>
            <person name="Schneider C."/>
            <person name="Schoenbach C."/>
            <person name="Sekiguchi K."/>
            <person name="Semple C.A."/>
            <person name="Seno S."/>
            <person name="Sessa L."/>
            <person name="Sheng Y."/>
            <person name="Shibata Y."/>
            <person name="Shimada H."/>
            <person name="Shimada K."/>
            <person name="Silva D."/>
            <person name="Sinclair B."/>
            <person name="Sperling S."/>
            <person name="Stupka E."/>
            <person name="Sugiura K."/>
            <person name="Sultana R."/>
            <person name="Takenaka Y."/>
            <person name="Taki K."/>
            <person name="Tammoja K."/>
            <person name="Tan S.L."/>
            <person name="Tang S."/>
            <person name="Taylor M.S."/>
            <person name="Tegner J."/>
            <person name="Teichmann S.A."/>
            <person name="Ueda H.R."/>
            <person name="van Nimwegen E."/>
            <person name="Verardo R."/>
            <person name="Wei C.L."/>
            <person name="Yagi K."/>
            <person name="Yamanishi H."/>
            <person name="Zabarovsky E."/>
            <person name="Zhu S."/>
            <person name="Zimmer A."/>
            <person name="Hide W."/>
            <person name="Bult C."/>
            <person name="Grimmond S.M."/>
            <person name="Teasdale R.D."/>
            <person name="Liu E.T."/>
            <person name="Brusic V."/>
            <person name="Quackenbush J."/>
            <person name="Wahlestedt C."/>
            <person name="Mattick J.S."/>
            <person name="Hume D.A."/>
            <person name="Kai C."/>
            <person name="Sasaki D."/>
            <person name="Tomaru Y."/>
            <person name="Fukuda S."/>
            <person name="Kanamori-Katayama M."/>
            <person name="Suzuki M."/>
            <person name="Aoki J."/>
            <person name="Arakawa T."/>
            <person name="Iida J."/>
            <person name="Imamura K."/>
            <person name="Itoh M."/>
            <person name="Kato T."/>
            <person name="Kawaji H."/>
            <person name="Kawagashira N."/>
            <person name="Kawashima T."/>
            <person name="Kojima M."/>
            <person name="Kondo S."/>
            <person name="Konno H."/>
            <person name="Nakano K."/>
            <person name="Ninomiya N."/>
            <person name="Nishio T."/>
            <person name="Okada M."/>
            <person name="Plessy C."/>
            <person name="Shibata K."/>
            <person name="Shiraki T."/>
            <person name="Suzuki S."/>
            <person name="Tagami M."/>
            <person name="Waki K."/>
            <person name="Watahiki A."/>
            <person name="Okamura-Oho Y."/>
            <person name="Suzuki H."/>
            <person name="Kawai J."/>
            <person name="Hayashizaki Y."/>
        </authorList>
    </citation>
    <scope>NUCLEOTIDE SEQUENCE [LARGE SCALE MRNA] OF 1-205</scope>
    <source>
        <strain>C57BL/6J</strain>
        <tissue>Muellerian duct</tissue>
    </source>
</reference>
<reference key="3">
    <citation type="journal article" date="2007" name="Proc. Natl. Acad. Sci. U.S.A.">
        <title>Large-scale phosphorylation analysis of mouse liver.</title>
        <authorList>
            <person name="Villen J."/>
            <person name="Beausoleil S.A."/>
            <person name="Gerber S.A."/>
            <person name="Gygi S.P."/>
        </authorList>
    </citation>
    <scope>PHOSPHORYLATION [LARGE SCALE ANALYSIS] AT SER-269</scope>
    <scope>IDENTIFICATION BY MASS SPECTROMETRY [LARGE SCALE ANALYSIS]</scope>
    <source>
        <tissue>Liver</tissue>
    </source>
</reference>
<reference key="4">
    <citation type="journal article" date="2009" name="Immunity">
        <title>The phagosomal proteome in interferon-gamma-activated macrophages.</title>
        <authorList>
            <person name="Trost M."/>
            <person name="English L."/>
            <person name="Lemieux S."/>
            <person name="Courcelles M."/>
            <person name="Desjardins M."/>
            <person name="Thibault P."/>
        </authorList>
    </citation>
    <scope>PHOSPHORYLATION [LARGE SCALE ANALYSIS] AT SER-269</scope>
    <scope>IDENTIFICATION BY MASS SPECTROMETRY [LARGE SCALE ANALYSIS]</scope>
</reference>
<reference key="5">
    <citation type="journal article" date="2010" name="Cell">
        <title>A tissue-specific atlas of mouse protein phosphorylation and expression.</title>
        <authorList>
            <person name="Huttlin E.L."/>
            <person name="Jedrychowski M.P."/>
            <person name="Elias J.E."/>
            <person name="Goswami T."/>
            <person name="Rad R."/>
            <person name="Beausoleil S.A."/>
            <person name="Villen J."/>
            <person name="Haas W."/>
            <person name="Sowa M.E."/>
            <person name="Gygi S.P."/>
        </authorList>
    </citation>
    <scope>PHOSPHORYLATION [LARGE SCALE ANALYSIS] AT SER-269</scope>
    <scope>IDENTIFICATION BY MASS SPECTROMETRY [LARGE SCALE ANALYSIS]</scope>
    <source>
        <tissue>Brain</tissue>
        <tissue>Brown adipose tissue</tissue>
        <tissue>Heart</tissue>
        <tissue>Kidney</tissue>
        <tissue>Lung</tissue>
    </source>
</reference>
<proteinExistence type="evidence at protein level"/>
<evidence type="ECO:0000250" key="1">
    <source>
        <dbReference type="UniProtKB" id="O14113"/>
    </source>
</evidence>
<evidence type="ECO:0000250" key="2">
    <source>
        <dbReference type="UniProtKB" id="Q5BJN8"/>
    </source>
</evidence>
<evidence type="ECO:0000250" key="3">
    <source>
        <dbReference type="UniProtKB" id="Q6IQ49"/>
    </source>
</evidence>
<evidence type="ECO:0000255" key="4"/>
<evidence type="ECO:0000256" key="5">
    <source>
        <dbReference type="SAM" id="MobiDB-lite"/>
    </source>
</evidence>
<evidence type="ECO:0000305" key="6"/>
<evidence type="ECO:0007744" key="7">
    <source>
    </source>
</evidence>
<evidence type="ECO:0007744" key="8">
    <source>
    </source>
</evidence>
<evidence type="ECO:0007744" key="9">
    <source>
    </source>
</evidence>
<sequence>MAEAAVVAWVRGPGTVWKALPCASVGCSVRDVIYRHCQEQEVPVECFFVTCNGVLVNAGDKVQHGAVYSLEPRLRGGKGGFGSMLRALGAQIEKTTNREACRDLSGRRLRDVNHEKAMAEWVKQQAEREAEKEQRRLERLQRKLAEPAHCFTSPDYQRQCHEMAERLEDSVLKGMQAASSKMVSAEITETRKRPNKSKTDQETSAKKRKRKCFWLGMDGLEAAEGSSTGSSEDSSEDDSEDAPGTSEQSCCAREDGIDAVEVAADRPGSPRSSASGTHSESPEKLQCPVTEPGQGILENTGTEPGETSDKECNERKTVTDPEETPARKETESHEATEKDQKTGMSGGDRAAMVLSGEDRKSVPAANLEGNNSGDTALGLEAVDLSAFSSAAELESLGLERLKCELMVLGLKCGGTLQERAARLFSVRGLTKELIDPALFAKPSKGKKK</sequence>
<gene>
    <name type="primary">Sde2</name>
</gene>
<feature type="propeptide" id="PRO_0000442522" description="UBL" evidence="3">
    <location>
        <begin position="1"/>
        <end position="77"/>
    </location>
</feature>
<feature type="chain" id="PRO_0000286085" description="Splicing regulator SDE2">
    <location>
        <begin position="78"/>
        <end position="448"/>
    </location>
</feature>
<feature type="domain" description="SAP" evidence="4">
    <location>
        <begin position="393"/>
        <end position="427"/>
    </location>
</feature>
<feature type="region of interest" description="Disordered" evidence="5">
    <location>
        <begin position="175"/>
        <end position="252"/>
    </location>
</feature>
<feature type="region of interest" description="Disordered" evidence="5">
    <location>
        <begin position="264"/>
        <end position="372"/>
    </location>
</feature>
<feature type="coiled-coil region" evidence="4">
    <location>
        <begin position="109"/>
        <end position="149"/>
    </location>
</feature>
<feature type="short sequence motif" description="PIP-box" evidence="3">
    <location>
        <begin position="39"/>
        <end position="52"/>
    </location>
</feature>
<feature type="compositionally biased region" description="Basic and acidic residues" evidence="5">
    <location>
        <begin position="188"/>
        <end position="205"/>
    </location>
</feature>
<feature type="compositionally biased region" description="Polar residues" evidence="5">
    <location>
        <begin position="270"/>
        <end position="279"/>
    </location>
</feature>
<feature type="compositionally biased region" description="Basic and acidic residues" evidence="5">
    <location>
        <begin position="307"/>
        <end position="341"/>
    </location>
</feature>
<feature type="site" description="Cleavage" evidence="3">
    <location>
        <begin position="77"/>
        <end position="78"/>
    </location>
</feature>
<feature type="modified residue" description="Phosphoserine" evidence="7 8 9">
    <location>
        <position position="269"/>
    </location>
</feature>
<feature type="modified residue" description="Phosphothreonine" evidence="3">
    <location>
        <position position="277"/>
    </location>
</feature>
<feature type="modified residue" description="Phosphoserine" evidence="3">
    <location>
        <position position="281"/>
    </location>
</feature>
<feature type="modified residue" description="Phosphothreonine" evidence="3">
    <location>
        <position position="324"/>
    </location>
</feature>
<feature type="modified residue" description="Phosphoserine" evidence="2">
    <location>
        <position position="332"/>
    </location>
</feature>
<name>SDE2_MOUSE</name>
<keyword id="KW-0131">Cell cycle</keyword>
<keyword id="KW-0132">Cell division</keyword>
<keyword id="KW-0175">Coiled coil</keyword>
<keyword id="KW-0963">Cytoplasm</keyword>
<keyword id="KW-0235">DNA replication</keyword>
<keyword id="KW-0238">DNA-binding</keyword>
<keyword id="KW-0498">Mitosis</keyword>
<keyword id="KW-0507">mRNA processing</keyword>
<keyword id="KW-0508">mRNA splicing</keyword>
<keyword id="KW-0539">Nucleus</keyword>
<keyword id="KW-0597">Phosphoprotein</keyword>
<keyword id="KW-1185">Reference proteome</keyword>
<keyword id="KW-0690">Ribosome biogenesis</keyword>
<keyword id="KW-0694">RNA-binding</keyword>
<keyword id="KW-0832">Ubl conjugation</keyword>
<protein>
    <recommendedName>
        <fullName evidence="6">Splicing regulator SDE2</fullName>
    </recommendedName>
    <alternativeName>
        <fullName evidence="6">Replication stress response regulator SDE2</fullName>
    </alternativeName>
</protein>
<accession>Q8K1J5</accession>
<accession>Q8BJX1</accession>
<comment type="function">
    <text evidence="3">Inhibits translesion DNA synthesis by preventing monoubiquitination of PCNA, this is necessary to counteract damage due to ultraviolet light-induced replication stress (By similarity). SDE2 is cleaved following PCNA binding, and its complete degradation is necessary to allow S-phase progression following DNA damage (By similarity).</text>
</comment>
<comment type="function">
    <text evidence="1 3">Plays a role in pre-mRNA splicing by facilitating excision of relatively short introns featuring weak 3'-splice sites (ss) and high GC content (By similarity). May recruit CACTIN to the spliceosome (By similarity).</text>
</comment>
<comment type="function">
    <text evidence="3">Plays a role in ribosome biogenesis by enabling SNORD3- and SNORD118-dependent cleavage of the 47S rRNA precursor (By similarity). Binds ncRNA (non-coding RNA) including the snoRNAs SNORD3 and SNORD118 (By similarity).</text>
</comment>
<comment type="subunit">
    <text evidence="3">Interacts (via PIP-box) with PCNA; the interaction is direct and prevents ultraviolet light induced monoubiquitination of PCNA (By similarity). Interacts with FBL/fibrillarin (By similarity). Interacts with CACTIN (By similarity). Interacts with SF3B1 (By similarity). Interacts with U2AF1 (By similarity).</text>
</comment>
<comment type="subcellular location">
    <subcellularLocation>
        <location evidence="3">Nucleus</location>
    </subcellularLocation>
    <subcellularLocation>
        <location evidence="3">Cytoplasm</location>
    </subcellularLocation>
</comment>
<comment type="domain">
    <text evidence="3">The PIP-box (PCNA interacting peptide) motif mediates both the interaction with PCNA and cleavage of the SDE2 precursor by a deubiquitinating enzyme.</text>
</comment>
<comment type="domain">
    <text evidence="3">The SAP domain is necessary for specific binding to DNA.</text>
</comment>
<comment type="domain">
    <text evidence="3">The propeptide displays a ubiquitin-like fold.</text>
</comment>
<comment type="PTM">
    <text evidence="3">Upon binding to PCNA, the N-terminal UBL (ubiquitin-like) propeptide is cleaved at Gly-77 by an unidentified deubiquitinating enzyme; the resulting mature SDE2 is degraded by the DCX(DTL) complex in a cell cycle- and DNA damage dependent manner.</text>
</comment>
<comment type="PTM">
    <text evidence="3">Both SDE2-UBL and the mature SDE2 are polyubiquitinated.</text>
</comment>
<comment type="similarity">
    <text evidence="6">Belongs to the SDE2 family.</text>
</comment>